<comment type="similarity">
    <text evidence="1">Belongs to the bacterial ribosomal protein bL35 family.</text>
</comment>
<feature type="chain" id="PRO_1000081629" description="Large ribosomal subunit protein bL35">
    <location>
        <begin position="1"/>
        <end position="64"/>
    </location>
</feature>
<name>RL35_SHESH</name>
<keyword id="KW-1185">Reference proteome</keyword>
<keyword id="KW-0687">Ribonucleoprotein</keyword>
<keyword id="KW-0689">Ribosomal protein</keyword>
<reference key="1">
    <citation type="submission" date="2007-08" db="EMBL/GenBank/DDBJ databases">
        <title>Complete sequence of Shewanella sediminis HAW-EB3.</title>
        <authorList>
            <consortium name="US DOE Joint Genome Institute"/>
            <person name="Copeland A."/>
            <person name="Lucas S."/>
            <person name="Lapidus A."/>
            <person name="Barry K."/>
            <person name="Glavina del Rio T."/>
            <person name="Dalin E."/>
            <person name="Tice H."/>
            <person name="Pitluck S."/>
            <person name="Chertkov O."/>
            <person name="Brettin T."/>
            <person name="Bruce D."/>
            <person name="Detter J.C."/>
            <person name="Han C."/>
            <person name="Schmutz J."/>
            <person name="Larimer F."/>
            <person name="Land M."/>
            <person name="Hauser L."/>
            <person name="Kyrpides N."/>
            <person name="Kim E."/>
            <person name="Zhao J.-S."/>
            <person name="Richardson P."/>
        </authorList>
    </citation>
    <scope>NUCLEOTIDE SEQUENCE [LARGE SCALE GENOMIC DNA]</scope>
    <source>
        <strain>HAW-EB3</strain>
    </source>
</reference>
<sequence>MPKMKTDKGVAKRFKKTANGFKRKQAHLRHILTKKSTKRKRHLRAKCQVAKSDVPAIARQLPYA</sequence>
<dbReference type="EMBL" id="CP000821">
    <property type="protein sequence ID" value="ABV36731.1"/>
    <property type="molecule type" value="Genomic_DNA"/>
</dbReference>
<dbReference type="RefSeq" id="WP_012142466.1">
    <property type="nucleotide sequence ID" value="NC_009831.1"/>
</dbReference>
<dbReference type="SMR" id="A8FV58"/>
<dbReference type="STRING" id="425104.Ssed_2122"/>
<dbReference type="KEGG" id="sse:Ssed_2122"/>
<dbReference type="eggNOG" id="COG0291">
    <property type="taxonomic scope" value="Bacteria"/>
</dbReference>
<dbReference type="HOGENOM" id="CLU_169643_1_1_6"/>
<dbReference type="OrthoDB" id="47476at2"/>
<dbReference type="Proteomes" id="UP000002015">
    <property type="component" value="Chromosome"/>
</dbReference>
<dbReference type="GO" id="GO:0022625">
    <property type="term" value="C:cytosolic large ribosomal subunit"/>
    <property type="evidence" value="ECO:0007669"/>
    <property type="project" value="TreeGrafter"/>
</dbReference>
<dbReference type="GO" id="GO:0003735">
    <property type="term" value="F:structural constituent of ribosome"/>
    <property type="evidence" value="ECO:0007669"/>
    <property type="project" value="InterPro"/>
</dbReference>
<dbReference type="GO" id="GO:0006412">
    <property type="term" value="P:translation"/>
    <property type="evidence" value="ECO:0007669"/>
    <property type="project" value="UniProtKB-UniRule"/>
</dbReference>
<dbReference type="FunFam" id="4.10.410.60:FF:000001">
    <property type="entry name" value="50S ribosomal protein L35"/>
    <property type="match status" value="1"/>
</dbReference>
<dbReference type="Gene3D" id="4.10.410.60">
    <property type="match status" value="1"/>
</dbReference>
<dbReference type="HAMAP" id="MF_00514">
    <property type="entry name" value="Ribosomal_bL35"/>
    <property type="match status" value="1"/>
</dbReference>
<dbReference type="InterPro" id="IPR001706">
    <property type="entry name" value="Ribosomal_bL35"/>
</dbReference>
<dbReference type="InterPro" id="IPR021137">
    <property type="entry name" value="Ribosomal_bL35-like"/>
</dbReference>
<dbReference type="InterPro" id="IPR018265">
    <property type="entry name" value="Ribosomal_bL35_CS"/>
</dbReference>
<dbReference type="InterPro" id="IPR037229">
    <property type="entry name" value="Ribosomal_bL35_sf"/>
</dbReference>
<dbReference type="NCBIfam" id="TIGR00001">
    <property type="entry name" value="rpmI_bact"/>
    <property type="match status" value="1"/>
</dbReference>
<dbReference type="PANTHER" id="PTHR33343">
    <property type="entry name" value="54S RIBOSOMAL PROTEIN BL35M"/>
    <property type="match status" value="1"/>
</dbReference>
<dbReference type="PANTHER" id="PTHR33343:SF1">
    <property type="entry name" value="LARGE RIBOSOMAL SUBUNIT PROTEIN BL35M"/>
    <property type="match status" value="1"/>
</dbReference>
<dbReference type="Pfam" id="PF01632">
    <property type="entry name" value="Ribosomal_L35p"/>
    <property type="match status" value="1"/>
</dbReference>
<dbReference type="PRINTS" id="PR00064">
    <property type="entry name" value="RIBOSOMALL35"/>
</dbReference>
<dbReference type="SUPFAM" id="SSF143034">
    <property type="entry name" value="L35p-like"/>
    <property type="match status" value="1"/>
</dbReference>
<dbReference type="PROSITE" id="PS00936">
    <property type="entry name" value="RIBOSOMAL_L35"/>
    <property type="match status" value="1"/>
</dbReference>
<accession>A8FV58</accession>
<organism>
    <name type="scientific">Shewanella sediminis (strain HAW-EB3)</name>
    <dbReference type="NCBI Taxonomy" id="425104"/>
    <lineage>
        <taxon>Bacteria</taxon>
        <taxon>Pseudomonadati</taxon>
        <taxon>Pseudomonadota</taxon>
        <taxon>Gammaproteobacteria</taxon>
        <taxon>Alteromonadales</taxon>
        <taxon>Shewanellaceae</taxon>
        <taxon>Shewanella</taxon>
    </lineage>
</organism>
<protein>
    <recommendedName>
        <fullName evidence="1">Large ribosomal subunit protein bL35</fullName>
    </recommendedName>
    <alternativeName>
        <fullName evidence="2">50S ribosomal protein L35</fullName>
    </alternativeName>
</protein>
<gene>
    <name evidence="1" type="primary">rpmI</name>
    <name type="ordered locus">Ssed_2122</name>
</gene>
<proteinExistence type="inferred from homology"/>
<evidence type="ECO:0000255" key="1">
    <source>
        <dbReference type="HAMAP-Rule" id="MF_00514"/>
    </source>
</evidence>
<evidence type="ECO:0000305" key="2"/>